<reference key="1">
    <citation type="journal article" date="2000" name="Nucleic Acids Res.">
        <title>Complete genome sequence of the alkaliphilic bacterium Bacillus halodurans and genomic sequence comparison with Bacillus subtilis.</title>
        <authorList>
            <person name="Takami H."/>
            <person name="Nakasone K."/>
            <person name="Takaki Y."/>
            <person name="Maeno G."/>
            <person name="Sasaki R."/>
            <person name="Masui N."/>
            <person name="Fuji F."/>
            <person name="Hirama C."/>
            <person name="Nakamura Y."/>
            <person name="Ogasawara N."/>
            <person name="Kuhara S."/>
            <person name="Horikoshi K."/>
        </authorList>
    </citation>
    <scope>NUCLEOTIDE SEQUENCE [LARGE SCALE GENOMIC DNA]</scope>
    <source>
        <strain>ATCC BAA-125 / DSM 18197 / FERM 7344 / JCM 9153 / C-125</strain>
    </source>
</reference>
<proteinExistence type="inferred from homology"/>
<name>DTD_HALH5</name>
<comment type="function">
    <text evidence="1">An aminoacyl-tRNA editing enzyme that deacylates mischarged D-aminoacyl-tRNAs. Also deacylates mischarged glycyl-tRNA(Ala), protecting cells against glycine mischarging by AlaRS. Acts via tRNA-based rather than protein-based catalysis; rejects L-amino acids rather than detecting D-amino acids in the active site. By recycling D-aminoacyl-tRNA to D-amino acids and free tRNA molecules, this enzyme counteracts the toxicity associated with the formation of D-aminoacyl-tRNA entities in vivo and helps enforce protein L-homochirality.</text>
</comment>
<comment type="catalytic activity">
    <reaction evidence="1">
        <text>glycyl-tRNA(Ala) + H2O = tRNA(Ala) + glycine + H(+)</text>
        <dbReference type="Rhea" id="RHEA:53744"/>
        <dbReference type="Rhea" id="RHEA-COMP:9657"/>
        <dbReference type="Rhea" id="RHEA-COMP:13640"/>
        <dbReference type="ChEBI" id="CHEBI:15377"/>
        <dbReference type="ChEBI" id="CHEBI:15378"/>
        <dbReference type="ChEBI" id="CHEBI:57305"/>
        <dbReference type="ChEBI" id="CHEBI:78442"/>
        <dbReference type="ChEBI" id="CHEBI:78522"/>
        <dbReference type="EC" id="3.1.1.96"/>
    </reaction>
</comment>
<comment type="catalytic activity">
    <reaction evidence="1">
        <text>a D-aminoacyl-tRNA + H2O = a tRNA + a D-alpha-amino acid + H(+)</text>
        <dbReference type="Rhea" id="RHEA:13953"/>
        <dbReference type="Rhea" id="RHEA-COMP:10123"/>
        <dbReference type="Rhea" id="RHEA-COMP:10124"/>
        <dbReference type="ChEBI" id="CHEBI:15377"/>
        <dbReference type="ChEBI" id="CHEBI:15378"/>
        <dbReference type="ChEBI" id="CHEBI:59871"/>
        <dbReference type="ChEBI" id="CHEBI:78442"/>
        <dbReference type="ChEBI" id="CHEBI:79333"/>
        <dbReference type="EC" id="3.1.1.96"/>
    </reaction>
</comment>
<comment type="subunit">
    <text evidence="1">Homodimer.</text>
</comment>
<comment type="subcellular location">
    <subcellularLocation>
        <location evidence="1">Cytoplasm</location>
    </subcellularLocation>
</comment>
<comment type="domain">
    <text evidence="1">A Gly-cisPro motif from one monomer fits into the active site of the other monomer to allow specific chiral rejection of L-amino acids.</text>
</comment>
<comment type="similarity">
    <text evidence="1">Belongs to the DTD family.</text>
</comment>
<evidence type="ECO:0000255" key="1">
    <source>
        <dbReference type="HAMAP-Rule" id="MF_00518"/>
    </source>
</evidence>
<gene>
    <name evidence="1" type="primary">dtd</name>
    <name type="ordered locus">BH1243</name>
</gene>
<sequence>MKVVLQRAKQAQVTVEGETVGAIDHGLVLLIGITHGDTEEDARYLAEKIAHLRIFEDEGGKMNQSVKDVGGAILSISQFTLYGDCRKGRRPNFMEAAKPEHAEPLYETLNSHLEQLGLHVETGRFGAMMDVQLINDGPVTLLVESK</sequence>
<keyword id="KW-0963">Cytoplasm</keyword>
<keyword id="KW-0378">Hydrolase</keyword>
<keyword id="KW-1185">Reference proteome</keyword>
<keyword id="KW-0694">RNA-binding</keyword>
<keyword id="KW-0820">tRNA-binding</keyword>
<organism>
    <name type="scientific">Halalkalibacterium halodurans (strain ATCC BAA-125 / DSM 18197 / FERM 7344 / JCM 9153 / C-125)</name>
    <name type="common">Bacillus halodurans</name>
    <dbReference type="NCBI Taxonomy" id="272558"/>
    <lineage>
        <taxon>Bacteria</taxon>
        <taxon>Bacillati</taxon>
        <taxon>Bacillota</taxon>
        <taxon>Bacilli</taxon>
        <taxon>Bacillales</taxon>
        <taxon>Bacillaceae</taxon>
        <taxon>Halalkalibacterium (ex Joshi et al. 2022)</taxon>
    </lineage>
</organism>
<protein>
    <recommendedName>
        <fullName evidence="1">D-aminoacyl-tRNA deacylase</fullName>
        <shortName evidence="1">DTD</shortName>
        <ecNumber evidence="1">3.1.1.96</ecNumber>
    </recommendedName>
    <alternativeName>
        <fullName evidence="1">Gly-tRNA(Ala) deacylase</fullName>
    </alternativeName>
</protein>
<feature type="chain" id="PRO_0000164520" description="D-aminoacyl-tRNA deacylase">
    <location>
        <begin position="1"/>
        <end position="146"/>
    </location>
</feature>
<feature type="short sequence motif" description="Gly-cisPro motif, important for rejection of L-amino acids" evidence="1">
    <location>
        <begin position="137"/>
        <end position="138"/>
    </location>
</feature>
<accession>Q9KDH0</accession>
<dbReference type="EC" id="3.1.1.96" evidence="1"/>
<dbReference type="EMBL" id="BA000004">
    <property type="protein sequence ID" value="BAB04962.1"/>
    <property type="molecule type" value="Genomic_DNA"/>
</dbReference>
<dbReference type="PIR" id="C83805">
    <property type="entry name" value="C83805"/>
</dbReference>
<dbReference type="RefSeq" id="WP_010897411.1">
    <property type="nucleotide sequence ID" value="NC_002570.2"/>
</dbReference>
<dbReference type="SMR" id="Q9KDH0"/>
<dbReference type="STRING" id="272558.gene:10727137"/>
<dbReference type="KEGG" id="bha:BH1243"/>
<dbReference type="eggNOG" id="COG1490">
    <property type="taxonomic scope" value="Bacteria"/>
</dbReference>
<dbReference type="HOGENOM" id="CLU_076901_1_0_9"/>
<dbReference type="OrthoDB" id="9801395at2"/>
<dbReference type="Proteomes" id="UP000001258">
    <property type="component" value="Chromosome"/>
</dbReference>
<dbReference type="GO" id="GO:0005737">
    <property type="term" value="C:cytoplasm"/>
    <property type="evidence" value="ECO:0007669"/>
    <property type="project" value="UniProtKB-SubCell"/>
</dbReference>
<dbReference type="GO" id="GO:0051500">
    <property type="term" value="F:D-tyrosyl-tRNA(Tyr) deacylase activity"/>
    <property type="evidence" value="ECO:0007669"/>
    <property type="project" value="TreeGrafter"/>
</dbReference>
<dbReference type="GO" id="GO:0106026">
    <property type="term" value="F:Gly-tRNA(Ala) deacylase activity"/>
    <property type="evidence" value="ECO:0007669"/>
    <property type="project" value="UniProtKB-UniRule"/>
</dbReference>
<dbReference type="GO" id="GO:0043908">
    <property type="term" value="F:Ser(Gly)-tRNA(Ala) hydrolase activity"/>
    <property type="evidence" value="ECO:0007669"/>
    <property type="project" value="UniProtKB-UniRule"/>
</dbReference>
<dbReference type="GO" id="GO:0000049">
    <property type="term" value="F:tRNA binding"/>
    <property type="evidence" value="ECO:0007669"/>
    <property type="project" value="UniProtKB-UniRule"/>
</dbReference>
<dbReference type="GO" id="GO:0019478">
    <property type="term" value="P:D-amino acid catabolic process"/>
    <property type="evidence" value="ECO:0007669"/>
    <property type="project" value="UniProtKB-UniRule"/>
</dbReference>
<dbReference type="CDD" id="cd00563">
    <property type="entry name" value="Dtyr_deacylase"/>
    <property type="match status" value="1"/>
</dbReference>
<dbReference type="FunFam" id="3.50.80.10:FF:000001">
    <property type="entry name" value="D-aminoacyl-tRNA deacylase"/>
    <property type="match status" value="1"/>
</dbReference>
<dbReference type="Gene3D" id="3.50.80.10">
    <property type="entry name" value="D-tyrosyl-tRNA(Tyr) deacylase"/>
    <property type="match status" value="1"/>
</dbReference>
<dbReference type="HAMAP" id="MF_00518">
    <property type="entry name" value="Deacylase_Dtd"/>
    <property type="match status" value="1"/>
</dbReference>
<dbReference type="InterPro" id="IPR003732">
    <property type="entry name" value="Daa-tRNA_deacyls_DTD"/>
</dbReference>
<dbReference type="InterPro" id="IPR023509">
    <property type="entry name" value="DTD-like_sf"/>
</dbReference>
<dbReference type="NCBIfam" id="TIGR00256">
    <property type="entry name" value="D-aminoacyl-tRNA deacylase"/>
    <property type="match status" value="1"/>
</dbReference>
<dbReference type="PANTHER" id="PTHR10472:SF5">
    <property type="entry name" value="D-AMINOACYL-TRNA DEACYLASE 1"/>
    <property type="match status" value="1"/>
</dbReference>
<dbReference type="PANTHER" id="PTHR10472">
    <property type="entry name" value="D-TYROSYL-TRNA TYR DEACYLASE"/>
    <property type="match status" value="1"/>
</dbReference>
<dbReference type="Pfam" id="PF02580">
    <property type="entry name" value="Tyr_Deacylase"/>
    <property type="match status" value="1"/>
</dbReference>
<dbReference type="SUPFAM" id="SSF69500">
    <property type="entry name" value="DTD-like"/>
    <property type="match status" value="1"/>
</dbReference>